<name>GNRHR_MACMU</name>
<reference key="1">
    <citation type="submission" date="2002-01" db="EMBL/GenBank/DDBJ databases">
        <title>Construction of a targeted rhesus macaque microarray.</title>
        <authorList>
            <person name="Norgren R.B. Jr."/>
            <person name="Zink M.A."/>
            <person name="Jia Y."/>
            <person name="Ojeda S.R."/>
            <person name="Spindel E.R."/>
        </authorList>
    </citation>
    <scope>NUCLEOTIDE SEQUENCE [GENOMIC DNA]</scope>
</reference>
<organism>
    <name type="scientific">Macaca mulatta</name>
    <name type="common">Rhesus macaque</name>
    <dbReference type="NCBI Taxonomy" id="9544"/>
    <lineage>
        <taxon>Eukaryota</taxon>
        <taxon>Metazoa</taxon>
        <taxon>Chordata</taxon>
        <taxon>Craniata</taxon>
        <taxon>Vertebrata</taxon>
        <taxon>Euteleostomi</taxon>
        <taxon>Mammalia</taxon>
        <taxon>Eutheria</taxon>
        <taxon>Euarchontoglires</taxon>
        <taxon>Primates</taxon>
        <taxon>Haplorrhini</taxon>
        <taxon>Catarrhini</taxon>
        <taxon>Cercopithecidae</taxon>
        <taxon>Cercopithecinae</taxon>
        <taxon>Macaca</taxon>
    </lineage>
</organism>
<accession>Q8SPZ1</accession>
<comment type="function">
    <text>Receptor for gonadotropin releasing hormone (GnRH) that mediates the action of GnRH to stimulate the secretion of the gonadotropic hormones luteinizing hormone (LH) and follicle-stimulating hormone (FSH). This receptor mediates its action by association with G-proteins that activate a phosphatidylinositol-calcium second messenger system.</text>
</comment>
<comment type="subcellular location">
    <subcellularLocation>
        <location>Cell membrane</location>
        <topology>Multi-pass membrane protein</topology>
    </subcellularLocation>
</comment>
<comment type="similarity">
    <text evidence="2">Belongs to the G-protein coupled receptor 1 family.</text>
</comment>
<dbReference type="EMBL" id="AF478039">
    <property type="protein sequence ID" value="AAL85874.1"/>
    <property type="molecule type" value="Genomic_DNA"/>
</dbReference>
<dbReference type="SMR" id="Q8SPZ1"/>
<dbReference type="STRING" id="9544.ENSMMUP00000005039"/>
<dbReference type="BindingDB" id="Q8SPZ1"/>
<dbReference type="ChEMBL" id="CHEMBL5647"/>
<dbReference type="DrugCentral" id="Q8SPZ1"/>
<dbReference type="PaxDb" id="9544-ENSMMUP00000005039"/>
<dbReference type="eggNOG" id="KOG3656">
    <property type="taxonomic scope" value="Eukaryota"/>
</dbReference>
<dbReference type="HOGENOM" id="CLU_009579_15_2_1"/>
<dbReference type="InParanoid" id="Q8SPZ1"/>
<dbReference type="Proteomes" id="UP000006718">
    <property type="component" value="Unassembled WGS sequence"/>
</dbReference>
<dbReference type="GO" id="GO:0005886">
    <property type="term" value="C:plasma membrane"/>
    <property type="evidence" value="ECO:0007669"/>
    <property type="project" value="UniProtKB-SubCell"/>
</dbReference>
<dbReference type="GO" id="GO:0004930">
    <property type="term" value="F:G protein-coupled receptor activity"/>
    <property type="evidence" value="ECO:0007669"/>
    <property type="project" value="UniProtKB-KW"/>
</dbReference>
<dbReference type="Gene3D" id="1.20.1070.10">
    <property type="entry name" value="Rhodopsin 7-helix transmembrane proteins"/>
    <property type="match status" value="1"/>
</dbReference>
<dbReference type="InterPro" id="IPR017452">
    <property type="entry name" value="GPCR_Rhodpsn_7TM"/>
</dbReference>
<dbReference type="SUPFAM" id="SSF81321">
    <property type="entry name" value="Family A G protein-coupled receptor-like"/>
    <property type="match status" value="1"/>
</dbReference>
<dbReference type="PROSITE" id="PS50262">
    <property type="entry name" value="G_PROTEIN_RECEP_F1_2"/>
    <property type="match status" value="1"/>
</dbReference>
<keyword id="KW-1003">Cell membrane</keyword>
<keyword id="KW-0297">G-protein coupled receptor</keyword>
<keyword id="KW-0472">Membrane</keyword>
<keyword id="KW-0675">Receptor</keyword>
<keyword id="KW-1185">Reference proteome</keyword>
<keyword id="KW-0807">Transducer</keyword>
<keyword id="KW-0812">Transmembrane</keyword>
<keyword id="KW-1133">Transmembrane helix</keyword>
<proteinExistence type="inferred from homology"/>
<sequence>VAFATSFTVCWTPYYVLGIWYWFDPEMLNRVSDPVNHFFFLFAFLNPCFDPLIYGYFSL</sequence>
<feature type="chain" id="PRO_0000069488" description="Gonadotropin-releasing hormone receptor">
    <location>
        <begin position="1" status="less than"/>
        <end position="59"/>
    </location>
</feature>
<feature type="topological domain" description="Cytoplasmic" evidence="1">
    <location>
        <begin position="1"/>
        <end position="2"/>
    </location>
</feature>
<feature type="transmembrane region" description="Helical; Name=6" evidence="1">
    <location>
        <begin position="3"/>
        <end position="23"/>
    </location>
</feature>
<feature type="topological domain" description="Extracellular" evidence="1">
    <location>
        <begin position="24"/>
        <end position="37"/>
    </location>
</feature>
<feature type="transmembrane region" description="Helical; Name=7" evidence="1">
    <location>
        <begin position="38"/>
        <end position="58"/>
    </location>
</feature>
<feature type="topological domain" description="Cytoplasmic" evidence="1">
    <location>
        <position position="59"/>
    </location>
</feature>
<feature type="non-terminal residue">
    <location>
        <position position="1"/>
    </location>
</feature>
<gene>
    <name type="primary">GNRHR</name>
</gene>
<protein>
    <recommendedName>
        <fullName>Gonadotropin-releasing hormone receptor</fullName>
        <shortName>GnRH receptor</shortName>
        <shortName>GnRH-R</shortName>
    </recommendedName>
</protein>
<evidence type="ECO:0000255" key="1"/>
<evidence type="ECO:0000255" key="2">
    <source>
        <dbReference type="PROSITE-ProRule" id="PRU00521"/>
    </source>
</evidence>